<sequence>MPPRKKRRQAAQKPQLLFHQQPLEAPKHRCRFPQLPVVTHTRQVPSKPVDHNTITSWVSPQFDTTAESWFPGKRKHHHRDHARRSSRKSTSSRFPCLTFETPQSSASSATPGILASRDGPSQPEKDISGRPLVPMLSPQSCRELSAHTFPDFPCVFIPPDIQTPESPGQGEPIPSELRENSLPSCSLHTSTPKSPEPGPVLVTDTPEEKYGIKVTWRRRRHLFAYLRERGKLSRSQFLVKD</sequence>
<organism>
    <name type="scientific">Bos taurus</name>
    <name type="common">Bovine</name>
    <dbReference type="NCBI Taxonomy" id="9913"/>
    <lineage>
        <taxon>Eukaryota</taxon>
        <taxon>Metazoa</taxon>
        <taxon>Chordata</taxon>
        <taxon>Craniata</taxon>
        <taxon>Vertebrata</taxon>
        <taxon>Euteleostomi</taxon>
        <taxon>Mammalia</taxon>
        <taxon>Eutheria</taxon>
        <taxon>Laurasiatheria</taxon>
        <taxon>Artiodactyla</taxon>
        <taxon>Ruminantia</taxon>
        <taxon>Pecora</taxon>
        <taxon>Bovidae</taxon>
        <taxon>Bovinae</taxon>
        <taxon>Bos</taxon>
    </lineage>
</organism>
<name>RHNO1_BOVIN</name>
<dbReference type="EMBL" id="BC116052">
    <property type="protein sequence ID" value="AAI16053.1"/>
    <property type="molecule type" value="mRNA"/>
</dbReference>
<dbReference type="RefSeq" id="NP_001069099.1">
    <property type="nucleotide sequence ID" value="NM_001075631.1"/>
</dbReference>
<dbReference type="RefSeq" id="XP_005207299.1">
    <property type="nucleotide sequence ID" value="XM_005207242.4"/>
</dbReference>
<dbReference type="FunCoup" id="Q1LZE2">
    <property type="interactions" value="1243"/>
</dbReference>
<dbReference type="STRING" id="9913.ENSBTAP00000021104"/>
<dbReference type="PaxDb" id="9913-ENSBTAP00000021104"/>
<dbReference type="GeneID" id="513642"/>
<dbReference type="KEGG" id="bta:513642"/>
<dbReference type="CTD" id="83695"/>
<dbReference type="VEuPathDB" id="HostDB:ENSBTAG00000015878"/>
<dbReference type="eggNOG" id="ENOG502S7M3">
    <property type="taxonomic scope" value="Eukaryota"/>
</dbReference>
<dbReference type="HOGENOM" id="CLU_075584_0_0_1"/>
<dbReference type="InParanoid" id="Q1LZE2"/>
<dbReference type="OMA" id="PKHHYGS"/>
<dbReference type="OrthoDB" id="9942438at2759"/>
<dbReference type="TreeFam" id="TF336053"/>
<dbReference type="Reactome" id="R-BTA-5685938">
    <property type="pathway name" value="HDR through Single Strand Annealing (SSA)"/>
</dbReference>
<dbReference type="Reactome" id="R-BTA-5693607">
    <property type="pathway name" value="Processing of DNA double-strand break ends"/>
</dbReference>
<dbReference type="Reactome" id="R-BTA-6804756">
    <property type="pathway name" value="Regulation of TP53 Activity through Phosphorylation"/>
</dbReference>
<dbReference type="Reactome" id="R-BTA-69473">
    <property type="pathway name" value="G2/M DNA damage checkpoint"/>
</dbReference>
<dbReference type="Proteomes" id="UP000009136">
    <property type="component" value="Chromosome 5"/>
</dbReference>
<dbReference type="Bgee" id="ENSBTAG00000015878">
    <property type="expression patterns" value="Expressed in semen and 104 other cell types or tissues"/>
</dbReference>
<dbReference type="GO" id="GO:0005694">
    <property type="term" value="C:chromosome"/>
    <property type="evidence" value="ECO:0000318"/>
    <property type="project" value="GO_Central"/>
</dbReference>
<dbReference type="GO" id="GO:0005634">
    <property type="term" value="C:nucleus"/>
    <property type="evidence" value="ECO:0000318"/>
    <property type="project" value="GO_Central"/>
</dbReference>
<dbReference type="GO" id="GO:0035861">
    <property type="term" value="C:site of double-strand break"/>
    <property type="evidence" value="ECO:0000250"/>
    <property type="project" value="UniProtKB"/>
</dbReference>
<dbReference type="GO" id="GO:0140463">
    <property type="term" value="F:chromatin-protein adaptor activity"/>
    <property type="evidence" value="ECO:0000250"/>
    <property type="project" value="UniProtKB"/>
</dbReference>
<dbReference type="GO" id="GO:0071479">
    <property type="term" value="P:cellular response to ionizing radiation"/>
    <property type="evidence" value="ECO:0007669"/>
    <property type="project" value="InterPro"/>
</dbReference>
<dbReference type="GO" id="GO:0000077">
    <property type="term" value="P:DNA damage checkpoint signaling"/>
    <property type="evidence" value="ECO:0000318"/>
    <property type="project" value="GO_Central"/>
</dbReference>
<dbReference type="GO" id="GO:0097681">
    <property type="term" value="P:double-strand break repair via alternative nonhomologous end joining"/>
    <property type="evidence" value="ECO:0000250"/>
    <property type="project" value="UniProtKB"/>
</dbReference>
<dbReference type="GO" id="GO:1990166">
    <property type="term" value="P:protein localization to site of double-strand break"/>
    <property type="evidence" value="ECO:0000250"/>
    <property type="project" value="UniProtKB"/>
</dbReference>
<dbReference type="GO" id="GO:0000725">
    <property type="term" value="P:recombinational repair"/>
    <property type="evidence" value="ECO:0000318"/>
    <property type="project" value="GO_Central"/>
</dbReference>
<dbReference type="InterPro" id="IPR029293">
    <property type="entry name" value="RHNO1"/>
</dbReference>
<dbReference type="PANTHER" id="PTHR35541">
    <property type="entry name" value="RAD9, HUS1, RAD1-INTERACTING NUCLEAR ORPHAN PROTEIN 1"/>
    <property type="match status" value="1"/>
</dbReference>
<dbReference type="PANTHER" id="PTHR35541:SF1">
    <property type="entry name" value="RAD9, HUS1, RAD1-INTERACTING NUCLEAR ORPHAN PROTEIN 1"/>
    <property type="match status" value="1"/>
</dbReference>
<dbReference type="Pfam" id="PF15319">
    <property type="entry name" value="RHINO"/>
    <property type="match status" value="1"/>
</dbReference>
<gene>
    <name type="primary">RHNO1</name>
</gene>
<protein>
    <recommendedName>
        <fullName>RAD9, HUS1, RAD1-interacting nuclear orphan protein 1</fullName>
    </recommendedName>
</protein>
<reference key="1">
    <citation type="submission" date="2006-05" db="EMBL/GenBank/DDBJ databases">
        <authorList>
            <consortium name="NIH - Mammalian Gene Collection (MGC) project"/>
        </authorList>
    </citation>
    <scope>NUCLEOTIDE SEQUENCE [LARGE SCALE MRNA]</scope>
    <source>
        <strain>Hereford</strain>
        <tissue>Ascending colon</tissue>
    </source>
</reference>
<accession>Q1LZE2</accession>
<feature type="chain" id="PRO_0000263104" description="RAD9, HUS1, RAD1-interacting nuclear orphan protein 1">
    <location>
        <begin position="1"/>
        <end position="241"/>
    </location>
</feature>
<feature type="region of interest" description="Disordered" evidence="2">
    <location>
        <begin position="1"/>
        <end position="27"/>
    </location>
</feature>
<feature type="region of interest" description="Disordered" evidence="2">
    <location>
        <begin position="68"/>
        <end position="134"/>
    </location>
</feature>
<feature type="region of interest" description="Disordered" evidence="2">
    <location>
        <begin position="157"/>
        <end position="204"/>
    </location>
</feature>
<feature type="short sequence motif" description="RAD1-binding motif" evidence="1">
    <location>
        <begin position="56"/>
        <end position="62"/>
    </location>
</feature>
<feature type="short sequence motif" description="D-box" evidence="1">
    <location>
        <begin position="129"/>
        <end position="136"/>
    </location>
</feature>
<feature type="short sequence motif" description="KEN box" evidence="1">
    <location>
        <begin position="177"/>
        <end position="181"/>
    </location>
</feature>
<feature type="compositionally biased region" description="Basic residues" evidence="2">
    <location>
        <begin position="1"/>
        <end position="10"/>
    </location>
</feature>
<feature type="compositionally biased region" description="Basic residues" evidence="2">
    <location>
        <begin position="72"/>
        <end position="87"/>
    </location>
</feature>
<feature type="compositionally biased region" description="Polar residues" evidence="2">
    <location>
        <begin position="100"/>
        <end position="110"/>
    </location>
</feature>
<feature type="compositionally biased region" description="Polar residues" evidence="2">
    <location>
        <begin position="181"/>
        <end position="193"/>
    </location>
</feature>
<proteinExistence type="evidence at transcript level"/>
<evidence type="ECO:0000250" key="1">
    <source>
        <dbReference type="UniProtKB" id="Q9BSD3"/>
    </source>
</evidence>
<evidence type="ECO:0000256" key="2">
    <source>
        <dbReference type="SAM" id="MobiDB-lite"/>
    </source>
</evidence>
<comment type="function">
    <text evidence="1">Involved in microhomology-mediated end-joining (MMEJ) DNA repair by promoting recruitment of polymerase theta (POLQ) to DNA damage sites during mitosis. MMEJ is an alternative non-homologous end-joining (NHEJ) machinery that takes place during mitosis to repair double-strand breaks in DNA that originate in S-phase. Accumulates in M-phase; following phosphorylation by PLK1, interacts with POLQ, enabling its recruitment to double-strand breaks for subsequent repair. Also involved in the DNA damage response (DDR) signaling in response to genotoxic stresses such as ionizing radiation (IR) during the S phase. Recruited to sites of DNA damage through interaction with the 9-1-1 cell-cycle checkpoint response complex and TOPBP1 in a ATR-dependent manner. Required for the progression of the G1 to S phase transition. Plays a role in the stimulation of CHEK1 phosphorylation.</text>
</comment>
<comment type="subunit">
    <text evidence="1">Interacts (when phosphorylated by PLK1) with POLQ; promoting POLQ recruitment to DNA damage sites. Interacts with RAD1; interaction is direct and promotes association with the 9-1-1 (RAD9-RAD1-HUS1) complex. Interacts with RAD18. Interacts with TOPBP1. Interacts with UBE2N.</text>
</comment>
<comment type="subcellular location">
    <subcellularLocation>
        <location evidence="1">Nucleus</location>
    </subcellularLocation>
    <subcellularLocation>
        <location evidence="1">Chromosome</location>
    </subcellularLocation>
    <text evidence="1">Localizes to sites of DNA damage in a H2AX-independent manner.</text>
</comment>
<comment type="domain">
    <text evidence="1">The RAD1-binding motif mediates interaction with RAD1.</text>
</comment>
<comment type="PTM">
    <text evidence="1">Phosphorylated by PLK1, promoting interaction with polymerase theta (POLQ).</text>
</comment>
<comment type="PTM">
    <text evidence="1">Ubiquitinated and degraded by the APC/C complex upon mitotic exit.</text>
</comment>
<keyword id="KW-0131">Cell cycle</keyword>
<keyword id="KW-0158">Chromosome</keyword>
<keyword id="KW-0227">DNA damage</keyword>
<keyword id="KW-0234">DNA repair</keyword>
<keyword id="KW-0539">Nucleus</keyword>
<keyword id="KW-0597">Phosphoprotein</keyword>
<keyword id="KW-1185">Reference proteome</keyword>
<keyword id="KW-0832">Ubl conjugation</keyword>